<sequence>MSEDSEKEDYSDRTISDEDESDEDMFMKFVSEDLHRCALLTADSFGDPFFPRTTQILLEYQLGRWVPRLREPRDLYGVSSSGPLSPTRWPYHCEVIDEKVQHIDWTPSCPEPVYIPTGLETEPLYPDSKEATVVYLAEDAYKEPCFVYSRVGGNRTPLKQPVDYRDNTLMFEARFESGNLQKVVKVAEYEYQLTVRPDLFTNKHTQWYYFQVTNMRAGIVYRFTIVNFTKPASLYSRGMRPLFYSEKEAKAHHIGWQRIGDQIKYYRNNPGQDGRHYFSLTWTFQFPHNKDTCYFAHCYPYTYTNLQEYLSGINNDPVRSKFCKIRVLCHTLARNMVYILTITTPLKNSDSRKRKAVILTARVHPGETNSSWIMKGFLDYILGNSSDAQLLRDTFVFKVVPMLNPDGVIVGNYRCSLAGRDLNRNYTSLLKESFPSVWYTRNMVHRLMEKREVILYCDLHGHSRKENIFMYGCDGSDRSKTLYLQQRIFPLMLSKNCPDKFSFSACKFNVQKSKEGTGRVVMWKMGIRNSFTMEATFCGSTLGNKRGTHFSTKDLESMGYHFCDSLLDYCDPDRTKYYRCLKELEEMERHITLEKVFEDSDTPVIDITLDVESSSRGSDSSESIDSLTYLLKLTSQKKHLKTKKERNSTIASHQNARGQEVYDRGHLLQRHTQSNSDVKDTRPNEPDDYMVDYFRRQLPNQGLAHCKLRLPGSRHSPASASRVAGTTGTRHHTWLIFVFLVEMGKKIPLKGTDLYGNCFKVTSLQSPMGKQTSTWTEKTRIPTEDLHHNLKSKIKECISFQSKKTGINWTDDEKRSYKDKGIVQTQEILQYLLPIVHSTKNMQTTQIKQLFNPRTNFQIQHQLNPATCRNIKKYSTSWTAPRNHPFVIQGDVMANSSEWVQSKPHRSLESLSPLKGPKKNKHSQIWAIKNEDIKPLSSKWETASSSFGMDANVLKYKSLQAEETNQQSSKHTALHLTKNKDEQANKNDGQPTLYLKFQRES</sequence>
<keyword id="KW-0025">Alternative splicing</keyword>
<keyword id="KW-0121">Carboxypeptidase</keyword>
<keyword id="KW-0963">Cytoplasm</keyword>
<keyword id="KW-0378">Hydrolase</keyword>
<keyword id="KW-0479">Metal-binding</keyword>
<keyword id="KW-0482">Metalloprotease</keyword>
<keyword id="KW-0645">Protease</keyword>
<keyword id="KW-1185">Reference proteome</keyword>
<keyword id="KW-0862">Zinc</keyword>
<evidence type="ECO:0000250" key="1"/>
<evidence type="ECO:0000250" key="2">
    <source>
        <dbReference type="UniProtKB" id="Q8CDP0"/>
    </source>
</evidence>
<evidence type="ECO:0000255" key="3">
    <source>
        <dbReference type="PROSITE-ProRule" id="PRU01379"/>
    </source>
</evidence>
<evidence type="ECO:0000256" key="4">
    <source>
        <dbReference type="SAM" id="MobiDB-lite"/>
    </source>
</evidence>
<evidence type="ECO:0000269" key="5">
    <source>
    </source>
</evidence>
<evidence type="ECO:0000269" key="6">
    <source>
    </source>
</evidence>
<evidence type="ECO:0000269" key="7">
    <source>
    </source>
</evidence>
<evidence type="ECO:0000303" key="8">
    <source>
    </source>
</evidence>
<evidence type="ECO:0000303" key="9">
    <source>
    </source>
</evidence>
<evidence type="ECO:0000305" key="10"/>
<evidence type="ECO:0000305" key="11">
    <source>
    </source>
</evidence>
<evidence type="ECO:0000312" key="12">
    <source>
        <dbReference type="HGNC" id="HGNC:27981"/>
    </source>
</evidence>
<gene>
    <name evidence="12" type="primary">AGBL3</name>
    <name evidence="2" type="synonym">CCP3</name>
</gene>
<dbReference type="EC" id="3.4.17.-" evidence="2"/>
<dbReference type="EMBL" id="AK023045">
    <property type="protein sequence ID" value="BAB14371.1"/>
    <property type="molecule type" value="mRNA"/>
</dbReference>
<dbReference type="EMBL" id="AK302827">
    <property type="protein sequence ID" value="BAH13813.1"/>
    <property type="molecule type" value="mRNA"/>
</dbReference>
<dbReference type="EMBL" id="AC083862">
    <property type="status" value="NOT_ANNOTATED_CDS"/>
    <property type="molecule type" value="Genomic_DNA"/>
</dbReference>
<dbReference type="EMBL" id="AC083870">
    <property type="status" value="NOT_ANNOTATED_CDS"/>
    <property type="molecule type" value="Genomic_DNA"/>
</dbReference>
<dbReference type="EMBL" id="AC090497">
    <property type="status" value="NOT_ANNOTATED_CDS"/>
    <property type="molecule type" value="Genomic_DNA"/>
</dbReference>
<dbReference type="EMBL" id="BC030651">
    <property type="protein sequence ID" value="AAH30651.1"/>
    <property type="molecule type" value="mRNA"/>
</dbReference>
<dbReference type="CCDS" id="CCDS47718.1">
    <molecule id="Q8NEM8-4"/>
</dbReference>
<dbReference type="RefSeq" id="NP_848658.3">
    <molecule id="Q8NEM8-4"/>
    <property type="nucleotide sequence ID" value="NM_178563.4"/>
</dbReference>
<dbReference type="RefSeq" id="XP_016867625.1">
    <property type="nucleotide sequence ID" value="XM_017012136.1"/>
</dbReference>
<dbReference type="RefSeq" id="XP_016867626.1">
    <property type="nucleotide sequence ID" value="XM_017012137.1"/>
</dbReference>
<dbReference type="RefSeq" id="XP_047276276.1">
    <molecule id="Q8NEM8-2"/>
    <property type="nucleotide sequence ID" value="XM_047420320.1"/>
</dbReference>
<dbReference type="SMR" id="Q8NEM8"/>
<dbReference type="BioGRID" id="131041">
    <property type="interactions" value="9"/>
</dbReference>
<dbReference type="FunCoup" id="Q8NEM8">
    <property type="interactions" value="181"/>
</dbReference>
<dbReference type="IntAct" id="Q8NEM8">
    <property type="interactions" value="3"/>
</dbReference>
<dbReference type="STRING" id="9606.ENSP00000388275"/>
<dbReference type="MEROPS" id="M14.026"/>
<dbReference type="GlyGen" id="Q8NEM8">
    <property type="glycosylation" value="2 sites, 1 O-linked glycan (2 sites)"/>
</dbReference>
<dbReference type="iPTMnet" id="Q8NEM8"/>
<dbReference type="PhosphoSitePlus" id="Q8NEM8"/>
<dbReference type="BioMuta" id="AGBL3"/>
<dbReference type="DMDM" id="143955274"/>
<dbReference type="MassIVE" id="Q8NEM8"/>
<dbReference type="PaxDb" id="9606-ENSP00000388275"/>
<dbReference type="PeptideAtlas" id="Q8NEM8"/>
<dbReference type="ProteomicsDB" id="73184">
    <molecule id="Q8NEM8-1"/>
</dbReference>
<dbReference type="ProteomicsDB" id="73185">
    <molecule id="Q8NEM8-2"/>
</dbReference>
<dbReference type="ProteomicsDB" id="73186">
    <molecule id="Q8NEM8-3"/>
</dbReference>
<dbReference type="ProteomicsDB" id="73187">
    <molecule id="Q8NEM8-4"/>
</dbReference>
<dbReference type="Antibodypedia" id="9809">
    <property type="antibodies" value="63 antibodies from 21 providers"/>
</dbReference>
<dbReference type="DNASU" id="340351"/>
<dbReference type="Ensembl" id="ENST00000275763.10">
    <molecule id="Q8NEM8-2"/>
    <property type="protein sequence ID" value="ENSP00000275763.6"/>
    <property type="gene ID" value="ENSG00000146856.14"/>
</dbReference>
<dbReference type="Ensembl" id="ENST00000436302.6">
    <molecule id="Q8NEM8-4"/>
    <property type="protein sequence ID" value="ENSP00000388275.2"/>
    <property type="gene ID" value="ENSG00000146856.14"/>
</dbReference>
<dbReference type="GeneID" id="340351"/>
<dbReference type="KEGG" id="hsa:340351"/>
<dbReference type="MANE-Select" id="ENST00000436302.6">
    <molecule id="Q8NEM8-4"/>
    <property type="protein sequence ID" value="ENSP00000388275.2"/>
    <property type="RefSeq nucleotide sequence ID" value="NM_178563.4"/>
    <property type="RefSeq protein sequence ID" value="NP_848658.3"/>
</dbReference>
<dbReference type="UCSC" id="uc011kpw.2">
    <molecule id="Q8NEM8-1"/>
    <property type="organism name" value="human"/>
</dbReference>
<dbReference type="AGR" id="HGNC:27981"/>
<dbReference type="CTD" id="340351"/>
<dbReference type="DisGeNET" id="340351"/>
<dbReference type="GeneCards" id="AGBL3"/>
<dbReference type="HGNC" id="HGNC:27981">
    <property type="gene designation" value="AGBL3"/>
</dbReference>
<dbReference type="HPA" id="ENSG00000146856">
    <property type="expression patterns" value="Tissue enhanced (epididymis)"/>
</dbReference>
<dbReference type="MIM" id="617346">
    <property type="type" value="gene"/>
</dbReference>
<dbReference type="neXtProt" id="NX_Q8NEM8"/>
<dbReference type="OpenTargets" id="ENSG00000146856"/>
<dbReference type="PharmGKB" id="PA142672635"/>
<dbReference type="VEuPathDB" id="HostDB:ENSG00000146856"/>
<dbReference type="eggNOG" id="KOG1814">
    <property type="taxonomic scope" value="Eukaryota"/>
</dbReference>
<dbReference type="eggNOG" id="KOG3641">
    <property type="taxonomic scope" value="Eukaryota"/>
</dbReference>
<dbReference type="GeneTree" id="ENSGT00940000160916"/>
<dbReference type="HOGENOM" id="CLU_318835_0_0_1"/>
<dbReference type="InParanoid" id="Q8NEM8"/>
<dbReference type="OMA" id="HIXYKEP"/>
<dbReference type="OrthoDB" id="10253041at2759"/>
<dbReference type="PAN-GO" id="Q8NEM8">
    <property type="GO annotations" value="1 GO annotation based on evolutionary models"/>
</dbReference>
<dbReference type="PhylomeDB" id="Q8NEM8"/>
<dbReference type="TreeFam" id="TF313794"/>
<dbReference type="PathwayCommons" id="Q8NEM8"/>
<dbReference type="Reactome" id="R-HSA-8955332">
    <property type="pathway name" value="Carboxyterminal post-translational modifications of tubulin"/>
</dbReference>
<dbReference type="SignaLink" id="Q8NEM8"/>
<dbReference type="BioGRID-ORCS" id="340351">
    <property type="hits" value="20 hits in 1149 CRISPR screens"/>
</dbReference>
<dbReference type="GenomeRNAi" id="340351"/>
<dbReference type="Pharos" id="Q8NEM8">
    <property type="development level" value="Tbio"/>
</dbReference>
<dbReference type="PRO" id="PR:Q8NEM8"/>
<dbReference type="Proteomes" id="UP000005640">
    <property type="component" value="Chromosome 7"/>
</dbReference>
<dbReference type="RNAct" id="Q8NEM8">
    <property type="molecule type" value="protein"/>
</dbReference>
<dbReference type="Bgee" id="ENSG00000146856">
    <property type="expression patterns" value="Expressed in buccal mucosa cell and 116 other cell types or tissues"/>
</dbReference>
<dbReference type="ExpressionAtlas" id="Q8NEM8">
    <property type="expression patterns" value="baseline and differential"/>
</dbReference>
<dbReference type="GO" id="GO:0005814">
    <property type="term" value="C:centriole"/>
    <property type="evidence" value="ECO:0000318"/>
    <property type="project" value="GO_Central"/>
</dbReference>
<dbReference type="GO" id="GO:0005737">
    <property type="term" value="C:cytoplasm"/>
    <property type="evidence" value="ECO:0000318"/>
    <property type="project" value="GO_Central"/>
</dbReference>
<dbReference type="GO" id="GO:0005829">
    <property type="term" value="C:cytosol"/>
    <property type="evidence" value="ECO:0007669"/>
    <property type="project" value="UniProtKB-SubCell"/>
</dbReference>
<dbReference type="GO" id="GO:0015630">
    <property type="term" value="C:microtubule cytoskeleton"/>
    <property type="evidence" value="ECO:0000318"/>
    <property type="project" value="GO_Central"/>
</dbReference>
<dbReference type="GO" id="GO:0004181">
    <property type="term" value="F:metallocarboxypeptidase activity"/>
    <property type="evidence" value="ECO:0000314"/>
    <property type="project" value="UniProtKB"/>
</dbReference>
<dbReference type="GO" id="GO:0015631">
    <property type="term" value="F:tubulin binding"/>
    <property type="evidence" value="ECO:0000318"/>
    <property type="project" value="GO_Central"/>
</dbReference>
<dbReference type="GO" id="GO:0008270">
    <property type="term" value="F:zinc ion binding"/>
    <property type="evidence" value="ECO:0007669"/>
    <property type="project" value="InterPro"/>
</dbReference>
<dbReference type="GO" id="GO:0035610">
    <property type="term" value="P:protein side chain deglutamylation"/>
    <property type="evidence" value="ECO:0000314"/>
    <property type="project" value="UniProtKB"/>
</dbReference>
<dbReference type="GO" id="GO:0006508">
    <property type="term" value="P:proteolysis"/>
    <property type="evidence" value="ECO:0007669"/>
    <property type="project" value="UniProtKB-KW"/>
</dbReference>
<dbReference type="CDD" id="cd06907">
    <property type="entry name" value="M14_AGBL2-3_like"/>
    <property type="match status" value="1"/>
</dbReference>
<dbReference type="FunFam" id="2.60.40.3120:FF:000001">
    <property type="entry name" value="cytosolic carboxypeptidase 1 isoform X1"/>
    <property type="match status" value="1"/>
</dbReference>
<dbReference type="FunFam" id="3.40.630.10:FF:000011">
    <property type="entry name" value="cytosolic carboxypeptidase 2 isoform X1"/>
    <property type="match status" value="1"/>
</dbReference>
<dbReference type="Gene3D" id="2.60.40.3120">
    <property type="match status" value="1"/>
</dbReference>
<dbReference type="Gene3D" id="3.40.630.10">
    <property type="entry name" value="Zn peptidases"/>
    <property type="match status" value="1"/>
</dbReference>
<dbReference type="InterPro" id="IPR050821">
    <property type="entry name" value="Cytosolic_carboxypeptidase"/>
</dbReference>
<dbReference type="InterPro" id="IPR040626">
    <property type="entry name" value="Pepdidase_M14_N"/>
</dbReference>
<dbReference type="InterPro" id="IPR000834">
    <property type="entry name" value="Peptidase_M14"/>
</dbReference>
<dbReference type="PANTHER" id="PTHR12756">
    <property type="entry name" value="CYTOSOLIC CARBOXYPEPTIDASE"/>
    <property type="match status" value="1"/>
</dbReference>
<dbReference type="PANTHER" id="PTHR12756:SF23">
    <property type="entry name" value="CYTOSOLIC CARBOXYPEPTIDASE 3"/>
    <property type="match status" value="1"/>
</dbReference>
<dbReference type="Pfam" id="PF18027">
    <property type="entry name" value="Pepdidase_M14_N"/>
    <property type="match status" value="1"/>
</dbReference>
<dbReference type="Pfam" id="PF00246">
    <property type="entry name" value="Peptidase_M14"/>
    <property type="match status" value="1"/>
</dbReference>
<dbReference type="SUPFAM" id="SSF53187">
    <property type="entry name" value="Zn-dependent exopeptidases"/>
    <property type="match status" value="1"/>
</dbReference>
<dbReference type="PROSITE" id="PS52035">
    <property type="entry name" value="PEPTIDASE_M14"/>
    <property type="match status" value="1"/>
</dbReference>
<name>CBPC3_HUMAN</name>
<reference key="1">
    <citation type="journal article" date="2004" name="Nat. Genet.">
        <title>Complete sequencing and characterization of 21,243 full-length human cDNAs.</title>
        <authorList>
            <person name="Ota T."/>
            <person name="Suzuki Y."/>
            <person name="Nishikawa T."/>
            <person name="Otsuki T."/>
            <person name="Sugiyama T."/>
            <person name="Irie R."/>
            <person name="Wakamatsu A."/>
            <person name="Hayashi K."/>
            <person name="Sato H."/>
            <person name="Nagai K."/>
            <person name="Kimura K."/>
            <person name="Makita H."/>
            <person name="Sekine M."/>
            <person name="Obayashi M."/>
            <person name="Nishi T."/>
            <person name="Shibahara T."/>
            <person name="Tanaka T."/>
            <person name="Ishii S."/>
            <person name="Yamamoto J."/>
            <person name="Saito K."/>
            <person name="Kawai Y."/>
            <person name="Isono Y."/>
            <person name="Nakamura Y."/>
            <person name="Nagahari K."/>
            <person name="Murakami K."/>
            <person name="Yasuda T."/>
            <person name="Iwayanagi T."/>
            <person name="Wagatsuma M."/>
            <person name="Shiratori A."/>
            <person name="Sudo H."/>
            <person name="Hosoiri T."/>
            <person name="Kaku Y."/>
            <person name="Kodaira H."/>
            <person name="Kondo H."/>
            <person name="Sugawara M."/>
            <person name="Takahashi M."/>
            <person name="Kanda K."/>
            <person name="Yokoi T."/>
            <person name="Furuya T."/>
            <person name="Kikkawa E."/>
            <person name="Omura Y."/>
            <person name="Abe K."/>
            <person name="Kamihara K."/>
            <person name="Katsuta N."/>
            <person name="Sato K."/>
            <person name="Tanikawa M."/>
            <person name="Yamazaki M."/>
            <person name="Ninomiya K."/>
            <person name="Ishibashi T."/>
            <person name="Yamashita H."/>
            <person name="Murakawa K."/>
            <person name="Fujimori K."/>
            <person name="Tanai H."/>
            <person name="Kimata M."/>
            <person name="Watanabe M."/>
            <person name="Hiraoka S."/>
            <person name="Chiba Y."/>
            <person name="Ishida S."/>
            <person name="Ono Y."/>
            <person name="Takiguchi S."/>
            <person name="Watanabe S."/>
            <person name="Yosida M."/>
            <person name="Hotuta T."/>
            <person name="Kusano J."/>
            <person name="Kanehori K."/>
            <person name="Takahashi-Fujii A."/>
            <person name="Hara H."/>
            <person name="Tanase T.-O."/>
            <person name="Nomura Y."/>
            <person name="Togiya S."/>
            <person name="Komai F."/>
            <person name="Hara R."/>
            <person name="Takeuchi K."/>
            <person name="Arita M."/>
            <person name="Imose N."/>
            <person name="Musashino K."/>
            <person name="Yuuki H."/>
            <person name="Oshima A."/>
            <person name="Sasaki N."/>
            <person name="Aotsuka S."/>
            <person name="Yoshikawa Y."/>
            <person name="Matsunawa H."/>
            <person name="Ichihara T."/>
            <person name="Shiohata N."/>
            <person name="Sano S."/>
            <person name="Moriya S."/>
            <person name="Momiyama H."/>
            <person name="Satoh N."/>
            <person name="Takami S."/>
            <person name="Terashima Y."/>
            <person name="Suzuki O."/>
            <person name="Nakagawa S."/>
            <person name="Senoh A."/>
            <person name="Mizoguchi H."/>
            <person name="Goto Y."/>
            <person name="Shimizu F."/>
            <person name="Wakebe H."/>
            <person name="Hishigaki H."/>
            <person name="Watanabe T."/>
            <person name="Sugiyama A."/>
            <person name="Takemoto M."/>
            <person name="Kawakami B."/>
            <person name="Yamazaki M."/>
            <person name="Watanabe K."/>
            <person name="Kumagai A."/>
            <person name="Itakura S."/>
            <person name="Fukuzumi Y."/>
            <person name="Fujimori Y."/>
            <person name="Komiyama M."/>
            <person name="Tashiro H."/>
            <person name="Tanigami A."/>
            <person name="Fujiwara T."/>
            <person name="Ono T."/>
            <person name="Yamada K."/>
            <person name="Fujii Y."/>
            <person name="Ozaki K."/>
            <person name="Hirao M."/>
            <person name="Ohmori Y."/>
            <person name="Kawabata A."/>
            <person name="Hikiji T."/>
            <person name="Kobatake N."/>
            <person name="Inagaki H."/>
            <person name="Ikema Y."/>
            <person name="Okamoto S."/>
            <person name="Okitani R."/>
            <person name="Kawakami T."/>
            <person name="Noguchi S."/>
            <person name="Itoh T."/>
            <person name="Shigeta K."/>
            <person name="Senba T."/>
            <person name="Matsumura K."/>
            <person name="Nakajima Y."/>
            <person name="Mizuno T."/>
            <person name="Morinaga M."/>
            <person name="Sasaki M."/>
            <person name="Togashi T."/>
            <person name="Oyama M."/>
            <person name="Hata H."/>
            <person name="Watanabe M."/>
            <person name="Komatsu T."/>
            <person name="Mizushima-Sugano J."/>
            <person name="Satoh T."/>
            <person name="Shirai Y."/>
            <person name="Takahashi Y."/>
            <person name="Nakagawa K."/>
            <person name="Okumura K."/>
            <person name="Nagase T."/>
            <person name="Nomura N."/>
            <person name="Kikuchi H."/>
            <person name="Masuho Y."/>
            <person name="Yamashita R."/>
            <person name="Nakai K."/>
            <person name="Yada T."/>
            <person name="Nakamura Y."/>
            <person name="Ohara O."/>
            <person name="Isogai T."/>
            <person name="Sugano S."/>
        </authorList>
    </citation>
    <scope>NUCLEOTIDE SEQUENCE [LARGE SCALE MRNA] (ISOFORMS 3 AND 4)</scope>
    <scope>VARIANT GLN-122</scope>
    <source>
        <tissue>Testis</tissue>
    </source>
</reference>
<reference key="2">
    <citation type="journal article" date="2003" name="Nature">
        <title>The DNA sequence of human chromosome 7.</title>
        <authorList>
            <person name="Hillier L.W."/>
            <person name="Fulton R.S."/>
            <person name="Fulton L.A."/>
            <person name="Graves T.A."/>
            <person name="Pepin K.H."/>
            <person name="Wagner-McPherson C."/>
            <person name="Layman D."/>
            <person name="Maas J."/>
            <person name="Jaeger S."/>
            <person name="Walker R."/>
            <person name="Wylie K."/>
            <person name="Sekhon M."/>
            <person name="Becker M.C."/>
            <person name="O'Laughlin M.D."/>
            <person name="Schaller M.E."/>
            <person name="Fewell G.A."/>
            <person name="Delehaunty K.D."/>
            <person name="Miner T.L."/>
            <person name="Nash W.E."/>
            <person name="Cordes M."/>
            <person name="Du H."/>
            <person name="Sun H."/>
            <person name="Edwards J."/>
            <person name="Bradshaw-Cordum H."/>
            <person name="Ali J."/>
            <person name="Andrews S."/>
            <person name="Isak A."/>
            <person name="Vanbrunt A."/>
            <person name="Nguyen C."/>
            <person name="Du F."/>
            <person name="Lamar B."/>
            <person name="Courtney L."/>
            <person name="Kalicki J."/>
            <person name="Ozersky P."/>
            <person name="Bielicki L."/>
            <person name="Scott K."/>
            <person name="Holmes A."/>
            <person name="Harkins R."/>
            <person name="Harris A."/>
            <person name="Strong C.M."/>
            <person name="Hou S."/>
            <person name="Tomlinson C."/>
            <person name="Dauphin-Kohlberg S."/>
            <person name="Kozlowicz-Reilly A."/>
            <person name="Leonard S."/>
            <person name="Rohlfing T."/>
            <person name="Rock S.M."/>
            <person name="Tin-Wollam A.-M."/>
            <person name="Abbott A."/>
            <person name="Minx P."/>
            <person name="Maupin R."/>
            <person name="Strowmatt C."/>
            <person name="Latreille P."/>
            <person name="Miller N."/>
            <person name="Johnson D."/>
            <person name="Murray J."/>
            <person name="Woessner J.P."/>
            <person name="Wendl M.C."/>
            <person name="Yang S.-P."/>
            <person name="Schultz B.R."/>
            <person name="Wallis J.W."/>
            <person name="Spieth J."/>
            <person name="Bieri T.A."/>
            <person name="Nelson J.O."/>
            <person name="Berkowicz N."/>
            <person name="Wohldmann P.E."/>
            <person name="Cook L.L."/>
            <person name="Hickenbotham M.T."/>
            <person name="Eldred J."/>
            <person name="Williams D."/>
            <person name="Bedell J.A."/>
            <person name="Mardis E.R."/>
            <person name="Clifton S.W."/>
            <person name="Chissoe S.L."/>
            <person name="Marra M.A."/>
            <person name="Raymond C."/>
            <person name="Haugen E."/>
            <person name="Gillett W."/>
            <person name="Zhou Y."/>
            <person name="James R."/>
            <person name="Phelps K."/>
            <person name="Iadanoto S."/>
            <person name="Bubb K."/>
            <person name="Simms E."/>
            <person name="Levy R."/>
            <person name="Clendenning J."/>
            <person name="Kaul R."/>
            <person name="Kent W.J."/>
            <person name="Furey T.S."/>
            <person name="Baertsch R.A."/>
            <person name="Brent M.R."/>
            <person name="Keibler E."/>
            <person name="Flicek P."/>
            <person name="Bork P."/>
            <person name="Suyama M."/>
            <person name="Bailey J.A."/>
            <person name="Portnoy M.E."/>
            <person name="Torrents D."/>
            <person name="Chinwalla A.T."/>
            <person name="Gish W.R."/>
            <person name="Eddy S.R."/>
            <person name="McPherson J.D."/>
            <person name="Olson M.V."/>
            <person name="Eichler E.E."/>
            <person name="Green E.D."/>
            <person name="Waterston R.H."/>
            <person name="Wilson R.K."/>
        </authorList>
    </citation>
    <scope>NUCLEOTIDE SEQUENCE [LARGE SCALE GENOMIC DNA]</scope>
</reference>
<reference key="3">
    <citation type="journal article" date="2004" name="Genome Res.">
        <title>The status, quality, and expansion of the NIH full-length cDNA project: the Mammalian Gene Collection (MGC).</title>
        <authorList>
            <consortium name="The MGC Project Team"/>
        </authorList>
    </citation>
    <scope>NUCLEOTIDE SEQUENCE [LARGE SCALE MRNA] (ISOFORM 2)</scope>
    <scope>VARIANT GLN-122</scope>
    <source>
        <tissue>Testis</tissue>
    </source>
</reference>
<reference key="4">
    <citation type="journal article" date="2007" name="FASEB J.">
        <title>Nna1-like proteins are active metallocarboxypeptidases of a new and diverse M14 subfamily.</title>
        <authorList>
            <person name="Rodriguez de la Vega M."/>
            <person name="Sevilla R.G."/>
            <person name="Hermoso A."/>
            <person name="Lorenzo J."/>
            <person name="Tanco S."/>
            <person name="Diez A."/>
            <person name="Fricker L.D."/>
            <person name="Bautista J.M."/>
            <person name="Aviles F.X."/>
        </authorList>
    </citation>
    <scope>SIMILARITY WITH M14 FAMILY</scope>
</reference>
<reference key="5">
    <citation type="journal article" date="2014" name="Mol. Biol. Cell">
        <title>The cytosolic carboxypeptidases CCP2 and CCP3 catalyze posttranslational removal of acidic amino acids.</title>
        <authorList>
            <person name="Tort O."/>
            <person name="Tanco S."/>
            <person name="Rocha C."/>
            <person name="Bieche I."/>
            <person name="Seixas C."/>
            <person name="Bosc C."/>
            <person name="Andrieux A."/>
            <person name="Moutin M.J."/>
            <person name="Aviles F.X."/>
            <person name="Lorenzo J."/>
            <person name="Janke C."/>
        </authorList>
    </citation>
    <scope>FUNCTION (ISOFORM 2)</scope>
</reference>
<proteinExistence type="evidence at transcript level"/>
<protein>
    <recommendedName>
        <fullName evidence="2">Cytosolic carboxypeptidase 3</fullName>
        <ecNumber evidence="2">3.4.17.-</ecNumber>
    </recommendedName>
    <alternativeName>
        <fullName>ATP/GTP-binding protein-like 3</fullName>
    </alternativeName>
    <alternativeName>
        <fullName evidence="10">Protein deglutamylase CCP3</fullName>
    </alternativeName>
</protein>
<organism>
    <name type="scientific">Homo sapiens</name>
    <name type="common">Human</name>
    <dbReference type="NCBI Taxonomy" id="9606"/>
    <lineage>
        <taxon>Eukaryota</taxon>
        <taxon>Metazoa</taxon>
        <taxon>Chordata</taxon>
        <taxon>Craniata</taxon>
        <taxon>Vertebrata</taxon>
        <taxon>Euteleostomi</taxon>
        <taxon>Mammalia</taxon>
        <taxon>Eutheria</taxon>
        <taxon>Euarchontoglires</taxon>
        <taxon>Primates</taxon>
        <taxon>Haplorrhini</taxon>
        <taxon>Catarrhini</taxon>
        <taxon>Hominidae</taxon>
        <taxon>Homo</taxon>
    </lineage>
</organism>
<accession>Q8NEM8</accession>
<accession>B7Z827</accession>
<accession>Q9H965</accession>
<feature type="chain" id="PRO_0000283751" description="Cytosolic carboxypeptidase 3">
    <location>
        <begin position="1"/>
        <end position="1001"/>
    </location>
</feature>
<feature type="domain" description="Peptidase M14" evidence="3">
    <location>
        <begin position="299"/>
        <end position="570"/>
    </location>
</feature>
<feature type="region of interest" description="Disordered" evidence="4">
    <location>
        <begin position="641"/>
        <end position="661"/>
    </location>
</feature>
<feature type="region of interest" description="Disordered" evidence="4">
    <location>
        <begin position="962"/>
        <end position="1001"/>
    </location>
</feature>
<feature type="compositionally biased region" description="Polar residues" evidence="4">
    <location>
        <begin position="648"/>
        <end position="657"/>
    </location>
</feature>
<feature type="compositionally biased region" description="Polar residues" evidence="4">
    <location>
        <begin position="962"/>
        <end position="971"/>
    </location>
</feature>
<feature type="active site" description="Proton donor/acceptor" evidence="3">
    <location>
        <position position="534"/>
    </location>
</feature>
<feature type="binding site" evidence="3">
    <location>
        <position position="364"/>
    </location>
    <ligand>
        <name>Zn(2+)</name>
        <dbReference type="ChEBI" id="CHEBI:29105"/>
        <note>catalytic</note>
    </ligand>
</feature>
<feature type="binding site" evidence="3">
    <location>
        <position position="367"/>
    </location>
    <ligand>
        <name>Zn(2+)</name>
        <dbReference type="ChEBI" id="CHEBI:29105"/>
        <note>catalytic</note>
    </ligand>
</feature>
<feature type="binding site" evidence="3">
    <location>
        <position position="460"/>
    </location>
    <ligand>
        <name>Zn(2+)</name>
        <dbReference type="ChEBI" id="CHEBI:29105"/>
        <note>catalytic</note>
    </ligand>
</feature>
<feature type="splice variant" id="VSP_024370" description="In isoform 3." evidence="8">
    <original>W</original>
    <variation>GVSCWSESHQAGAQWCDLGSLQPPPPRFKRFACFSLLSSRDYRRVPPRPANFVFLVETGFHHVGQDGLRLLTS</variation>
    <location>
        <position position="105"/>
    </location>
</feature>
<feature type="splice variant" id="VSP_024371" description="In isoform 3." evidence="8">
    <location>
        <begin position="106"/>
        <end position="1001"/>
    </location>
</feature>
<feature type="splice variant" id="VSP_024372" description="In isoform 2." evidence="9">
    <original>SSRGSDSS</original>
    <variation>RELTFLLR</variation>
    <location>
        <begin position="614"/>
        <end position="621"/>
    </location>
</feature>
<feature type="splice variant" id="VSP_024373" description="In isoform 2." evidence="9">
    <location>
        <begin position="622"/>
        <end position="1001"/>
    </location>
</feature>
<feature type="splice variant" id="VSP_040423" description="In isoform 4." evidence="8">
    <location>
        <begin position="704"/>
        <end position="784"/>
    </location>
</feature>
<feature type="sequence variant" id="VAR_031573" description="In dbSNP:rs2348049.">
    <original>F</original>
    <variation>Y</variation>
    <location>
        <position position="45"/>
    </location>
</feature>
<feature type="sequence variant" id="VAR_031574" description="In dbSNP:rs4236655." evidence="5 6">
    <original>E</original>
    <variation>Q</variation>
    <location>
        <position position="122"/>
    </location>
</feature>
<feature type="sequence variant" id="VAR_031575" description="In dbSNP:rs17804854.">
    <original>T</original>
    <variation>I</variation>
    <location>
        <position position="360"/>
    </location>
</feature>
<feature type="sequence conflict" description="In Ref. 1; BAH13813." evidence="10" ref="1">
    <original>F</original>
    <variation>S</variation>
    <location>
        <position position="210"/>
    </location>
</feature>
<feature type="sequence conflict" description="In Ref. 1; BAH13813." evidence="10" ref="1">
    <original>V</original>
    <variation>A</variation>
    <location>
        <position position="396"/>
    </location>
</feature>
<comment type="function">
    <text evidence="2">Metallocarboxypeptidase that mediates deglutamylation of tubulin and non-tubulin target proteins. Catalyzes the removal of polyglutamate side chains present on the gamma-carboxyl group of glutamate residues within the C-terminal tail of tubulin protein. Specifically cleaves tubulin long-side-chains, while it is not able to remove the branching point glutamate. Also catalyzes the removal of polyglutamate residues from the carboxy-terminus of non-tubulin proteins such as MYLK. May catalyze the hydrolysis of aspartate from the carboxy-terminus of target proteins. Does not show detyrosinase or deglycylase activities from the carboxy-terminus of target proteins.</text>
</comment>
<comment type="function">
    <molecule>Isoform 2</molecule>
    <text evidence="7">Metallocarboxypeptidase that mediates tubulin deglutamylation.</text>
</comment>
<comment type="catalytic activity">
    <reaction evidence="2">
        <text>(L-glutamyl)(n+1)-gamma-L-glutamyl-L-glutamyl-[protein] + H2O = (L-glutamyl)(n)-gamma-L-glutamyl-L-glutamyl-[protein] + L-glutamate</text>
        <dbReference type="Rhea" id="RHEA:60004"/>
        <dbReference type="Rhea" id="RHEA-COMP:15519"/>
        <dbReference type="Rhea" id="RHEA-COMP:15675"/>
        <dbReference type="ChEBI" id="CHEBI:15377"/>
        <dbReference type="ChEBI" id="CHEBI:29985"/>
        <dbReference type="ChEBI" id="CHEBI:143623"/>
    </reaction>
    <physiologicalReaction direction="left-to-right" evidence="2">
        <dbReference type="Rhea" id="RHEA:60005"/>
    </physiologicalReaction>
</comment>
<comment type="cofactor">
    <cofactor evidence="1">
        <name>Zn(2+)</name>
        <dbReference type="ChEBI" id="CHEBI:29105"/>
    </cofactor>
    <text evidence="1">Binds 1 zinc ion per subunit.</text>
</comment>
<comment type="subcellular location">
    <subcellularLocation>
        <location evidence="2">Cytoplasm</location>
        <location evidence="2">Cytosol</location>
    </subcellularLocation>
</comment>
<comment type="alternative products">
    <event type="alternative splicing"/>
    <isoform>
        <id>Q8NEM8-1</id>
        <name>1</name>
        <sequence type="displayed"/>
    </isoform>
    <isoform>
        <id>Q8NEM8-2</id>
        <name>2</name>
        <sequence type="described" ref="VSP_024372 VSP_024373"/>
    </isoform>
    <isoform>
        <id>Q8NEM8-3</id>
        <name>3</name>
        <sequence type="described" ref="VSP_024370 VSP_024371"/>
    </isoform>
    <isoform>
        <id>Q8NEM8-4</id>
        <name>4</name>
        <sequence type="described" ref="VSP_040423"/>
    </isoform>
</comment>
<comment type="similarity">
    <text evidence="11">Belongs to the peptidase M14 family.</text>
</comment>